<dbReference type="EMBL" id="AL954705">
    <property type="status" value="NOT_ANNOTATED_CDS"/>
    <property type="molecule type" value="Genomic_DNA"/>
</dbReference>
<dbReference type="EMBL" id="BC121187">
    <property type="protein sequence ID" value="AAI21188.1"/>
    <property type="molecule type" value="mRNA"/>
</dbReference>
<dbReference type="EMBL" id="BC137291">
    <property type="protein sequence ID" value="AAI37292.1"/>
    <property type="molecule type" value="mRNA"/>
</dbReference>
<dbReference type="CCDS" id="CCDS30579.1">
    <molecule id="Q5SNT2-2"/>
</dbReference>
<dbReference type="CCDS" id="CCDS44055.2">
    <molecule id="Q5SNT2-1"/>
</dbReference>
<dbReference type="RefSeq" id="NP_001010866.1">
    <molecule id="Q5SNT2-2"/>
    <property type="nucleotide sequence ID" value="NM_001010866.4"/>
</dbReference>
<dbReference type="RefSeq" id="NP_001124396.2">
    <molecule id="Q5SNT2-1"/>
    <property type="nucleotide sequence ID" value="NM_001130924.3"/>
</dbReference>
<dbReference type="RefSeq" id="XP_011539212.1">
    <molecule id="Q5SNT2-2"/>
    <property type="nucleotide sequence ID" value="XM_011540910.3"/>
</dbReference>
<dbReference type="RefSeq" id="XP_054190874.1">
    <molecule id="Q5SNT2-2"/>
    <property type="nucleotide sequence ID" value="XM_054334899.1"/>
</dbReference>
<dbReference type="SMR" id="Q5SNT2"/>
<dbReference type="BioGRID" id="128285">
    <property type="interactions" value="192"/>
</dbReference>
<dbReference type="FunCoup" id="Q5SNT2">
    <property type="interactions" value="504"/>
</dbReference>
<dbReference type="IntAct" id="Q5SNT2">
    <property type="interactions" value="73"/>
</dbReference>
<dbReference type="STRING" id="9606.ENSP00000344503"/>
<dbReference type="TCDB" id="1.I.1.1.3">
    <property type="family name" value="the nuclear pore complex (npc) family"/>
</dbReference>
<dbReference type="GlyGen" id="Q5SNT2">
    <property type="glycosylation" value="4 sites, 1 N-linked glycan (1 site), 2 O-linked glycans (2 sites)"/>
</dbReference>
<dbReference type="iPTMnet" id="Q5SNT2"/>
<dbReference type="PhosphoSitePlus" id="Q5SNT2"/>
<dbReference type="SwissPalm" id="Q5SNT2"/>
<dbReference type="BioMuta" id="TMEM201"/>
<dbReference type="DMDM" id="74743441"/>
<dbReference type="jPOST" id="Q5SNT2"/>
<dbReference type="MassIVE" id="Q5SNT2"/>
<dbReference type="PaxDb" id="9606-ENSP00000344503"/>
<dbReference type="PeptideAtlas" id="Q5SNT2"/>
<dbReference type="ProteomicsDB" id="63760">
    <molecule id="Q5SNT2-1"/>
</dbReference>
<dbReference type="ProteomicsDB" id="63761">
    <molecule id="Q5SNT2-2"/>
</dbReference>
<dbReference type="Pumba" id="Q5SNT2"/>
<dbReference type="Antibodypedia" id="62878">
    <property type="antibodies" value="21 antibodies from 8 providers"/>
</dbReference>
<dbReference type="DNASU" id="199953"/>
<dbReference type="Ensembl" id="ENST00000340305.9">
    <molecule id="Q5SNT2-2"/>
    <property type="protein sequence ID" value="ENSP00000344772.5"/>
    <property type="gene ID" value="ENSG00000188807.13"/>
</dbReference>
<dbReference type="Ensembl" id="ENST00000340381.11">
    <molecule id="Q5SNT2-1"/>
    <property type="protein sequence ID" value="ENSP00000344503.6"/>
    <property type="gene ID" value="ENSG00000188807.13"/>
</dbReference>
<dbReference type="GeneID" id="199953"/>
<dbReference type="KEGG" id="hsa:199953"/>
<dbReference type="MANE-Select" id="ENST00000340381.11">
    <property type="protein sequence ID" value="ENSP00000344503.6"/>
    <property type="RefSeq nucleotide sequence ID" value="NM_001130924.3"/>
    <property type="RefSeq protein sequence ID" value="NP_001124396.2"/>
</dbReference>
<dbReference type="UCSC" id="uc001apy.4">
    <molecule id="Q5SNT2-1"/>
    <property type="organism name" value="human"/>
</dbReference>
<dbReference type="AGR" id="HGNC:33719"/>
<dbReference type="CTD" id="199953"/>
<dbReference type="DisGeNET" id="199953"/>
<dbReference type="GeneCards" id="TMEM201"/>
<dbReference type="HGNC" id="HGNC:33719">
    <property type="gene designation" value="TMEM201"/>
</dbReference>
<dbReference type="HPA" id="ENSG00000188807">
    <property type="expression patterns" value="Tissue enhanced (skeletal)"/>
</dbReference>
<dbReference type="neXtProt" id="NX_Q5SNT2"/>
<dbReference type="OpenTargets" id="ENSG00000188807"/>
<dbReference type="PharmGKB" id="PA162406359"/>
<dbReference type="VEuPathDB" id="HostDB:ENSG00000188807"/>
<dbReference type="eggNOG" id="KOG4623">
    <property type="taxonomic scope" value="Eukaryota"/>
</dbReference>
<dbReference type="GeneTree" id="ENSGT00390000002713"/>
<dbReference type="HOGENOM" id="CLU_067578_0_0_1"/>
<dbReference type="InParanoid" id="Q5SNT2"/>
<dbReference type="OMA" id="LCLGTMP"/>
<dbReference type="OrthoDB" id="5966927at2759"/>
<dbReference type="PAN-GO" id="Q5SNT2">
    <property type="GO annotations" value="4 GO annotations based on evolutionary models"/>
</dbReference>
<dbReference type="PhylomeDB" id="Q5SNT2"/>
<dbReference type="TreeFam" id="TF106107"/>
<dbReference type="PathwayCommons" id="Q5SNT2"/>
<dbReference type="SignaLink" id="Q5SNT2"/>
<dbReference type="BioGRID-ORCS" id="199953">
    <property type="hits" value="27 hits in 1159 CRISPR screens"/>
</dbReference>
<dbReference type="CD-CODE" id="8C2F96ED">
    <property type="entry name" value="Centrosome"/>
</dbReference>
<dbReference type="ChiTaRS" id="TMEM201">
    <property type="organism name" value="human"/>
</dbReference>
<dbReference type="GenomeRNAi" id="199953"/>
<dbReference type="Pharos" id="Q5SNT2">
    <property type="development level" value="Tbio"/>
</dbReference>
<dbReference type="PRO" id="PR:Q5SNT2"/>
<dbReference type="Proteomes" id="UP000005640">
    <property type="component" value="Chromosome 1"/>
</dbReference>
<dbReference type="RNAct" id="Q5SNT2">
    <property type="molecule type" value="protein"/>
</dbReference>
<dbReference type="Bgee" id="ENSG00000188807">
    <property type="expression patterns" value="Expressed in cardiac muscle of right atrium and 158 other cell types or tissues"/>
</dbReference>
<dbReference type="ExpressionAtlas" id="Q5SNT2">
    <property type="expression patterns" value="baseline and differential"/>
</dbReference>
<dbReference type="GO" id="GO:0005737">
    <property type="term" value="C:cytoplasm"/>
    <property type="evidence" value="ECO:0007669"/>
    <property type="project" value="UniProtKB-KW"/>
</dbReference>
<dbReference type="GO" id="GO:0005635">
    <property type="term" value="C:nuclear envelope"/>
    <property type="evidence" value="ECO:0000314"/>
    <property type="project" value="UniProtKB"/>
</dbReference>
<dbReference type="GO" id="GO:0005637">
    <property type="term" value="C:nuclear inner membrane"/>
    <property type="evidence" value="ECO:0000314"/>
    <property type="project" value="UniProtKB"/>
</dbReference>
<dbReference type="GO" id="GO:0031965">
    <property type="term" value="C:nuclear membrane"/>
    <property type="evidence" value="ECO:0000318"/>
    <property type="project" value="GO_Central"/>
</dbReference>
<dbReference type="GO" id="GO:0000922">
    <property type="term" value="C:spindle pole"/>
    <property type="evidence" value="ECO:0007669"/>
    <property type="project" value="UniProtKB-SubCell"/>
</dbReference>
<dbReference type="GO" id="GO:0051015">
    <property type="term" value="F:actin filament binding"/>
    <property type="evidence" value="ECO:0000318"/>
    <property type="project" value="GO_Central"/>
</dbReference>
<dbReference type="GO" id="GO:0005521">
    <property type="term" value="F:lamin binding"/>
    <property type="evidence" value="ECO:0000318"/>
    <property type="project" value="GO_Central"/>
</dbReference>
<dbReference type="GO" id="GO:0001525">
    <property type="term" value="P:angiogenesis"/>
    <property type="evidence" value="ECO:0000315"/>
    <property type="project" value="UniProtKB"/>
</dbReference>
<dbReference type="GO" id="GO:0051642">
    <property type="term" value="P:centrosome localization"/>
    <property type="evidence" value="ECO:0000315"/>
    <property type="project" value="UniProtKB"/>
</dbReference>
<dbReference type="GO" id="GO:0010761">
    <property type="term" value="P:fibroblast migration"/>
    <property type="evidence" value="ECO:0007669"/>
    <property type="project" value="Ensembl"/>
</dbReference>
<dbReference type="GO" id="GO:0006998">
    <property type="term" value="P:nuclear envelope organization"/>
    <property type="evidence" value="ECO:0000315"/>
    <property type="project" value="UniProtKB"/>
</dbReference>
<dbReference type="GO" id="GO:0030473">
    <property type="term" value="P:nuclear migration along microtubule"/>
    <property type="evidence" value="ECO:0000318"/>
    <property type="project" value="GO_Central"/>
</dbReference>
<dbReference type="GO" id="GO:0010595">
    <property type="term" value="P:positive regulation of endothelial cell migration"/>
    <property type="evidence" value="ECO:0000315"/>
    <property type="project" value="UniProtKB"/>
</dbReference>
<dbReference type="GO" id="GO:0090435">
    <property type="term" value="P:protein localization to nuclear envelope"/>
    <property type="evidence" value="ECO:0000314"/>
    <property type="project" value="UniProtKB"/>
</dbReference>
<dbReference type="InterPro" id="IPR018617">
    <property type="entry name" value="Ima1_N"/>
</dbReference>
<dbReference type="InterPro" id="IPR040041">
    <property type="entry name" value="TMEM201"/>
</dbReference>
<dbReference type="InterPro" id="IPR018861">
    <property type="entry name" value="TMEM201_C"/>
</dbReference>
<dbReference type="PANTHER" id="PTHR28646">
    <property type="entry name" value="TRANSMEMBRANE PROTEIN 201"/>
    <property type="match status" value="1"/>
</dbReference>
<dbReference type="PANTHER" id="PTHR28646:SF1">
    <property type="entry name" value="TRANSMEMBRANE PROTEIN 201"/>
    <property type="match status" value="1"/>
</dbReference>
<dbReference type="Pfam" id="PF10476">
    <property type="entry name" value="DUF2448"/>
    <property type="match status" value="1"/>
</dbReference>
<dbReference type="Pfam" id="PF09779">
    <property type="entry name" value="Ima1_N"/>
    <property type="match status" value="1"/>
</dbReference>
<protein>
    <recommendedName>
        <fullName>Transmembrane protein 201</fullName>
    </recommendedName>
    <alternativeName>
        <fullName>Spindle-associated membrane protein 1</fullName>
    </alternativeName>
</protein>
<name>TM201_HUMAN</name>
<comment type="function">
    <text evidence="1 6 10">Critical regulator of angiogenesis and endothelial cell (EC) migration (PubMed:35311970). Promotes the migration of endothelial cells, which is essential for angiogenesis (PubMed:35311970). Interacts with the linker of nucleoskeleton and cytoskeleton (LINC) complex, which plays a vital role in connecting the cell's cytoskeleton to the nuclear envelope (PubMed:35311970). This interaction is essential for maintaining cellular structure and facilitating the movement of endothelial cells, which is critical for proper vascular development (PubMed:35311970). Involved in nuclear movement during fibroblast polarization and migration (By similarity). Overexpression can recruit Ran GTPase to the nuclear periphery (PubMed:27541860).</text>
</comment>
<comment type="function">
    <molecule>Isoform 2</molecule>
    <text evidence="4 5">May define a distinct membrane domain in the vicinity of the mitotic spindle (PubMed:19494128). Involved in the organization of the nuclear envelope implicating EMD, SUN1 and A-type lamina (PubMed:21610090).</text>
</comment>
<comment type="subunit">
    <text evidence="6 10">Interacts with SUN2 and LMNA (PubMed:35311970). May bind to Ran GTPase; has a greater affinity for Ran-GTP over Ran-GDP.</text>
</comment>
<comment type="subunit">
    <molecule>Isoform 2</molecule>
    <text evidence="5">Interacts with EMD.</text>
</comment>
<comment type="interaction">
    <interactant intactId="EBI-11994282">
        <id>Q5SNT2-2</id>
    </interactant>
    <interactant intactId="EBI-11977093">
        <id>Q6ZS10</id>
        <label>CLEC17A</label>
    </interactant>
    <organismsDiffer>false</organismsDiffer>
    <experiments>3</experiments>
</comment>
<comment type="interaction">
    <interactant intactId="EBI-11994282">
        <id>Q5SNT2-2</id>
    </interactant>
    <interactant intactId="EBI-18013275">
        <id>Q7Z7G2</id>
        <label>CPLX4</label>
    </interactant>
    <organismsDiffer>false</organismsDiffer>
    <experiments>3</experiments>
</comment>
<comment type="interaction">
    <interactant intactId="EBI-11994282">
        <id>Q5SNT2-2</id>
    </interactant>
    <interactant intactId="EBI-1046040">
        <id>P00387</id>
        <label>CYB5R3</label>
    </interactant>
    <organismsDiffer>false</organismsDiffer>
    <experiments>3</experiments>
</comment>
<comment type="interaction">
    <interactant intactId="EBI-11994282">
        <id>Q5SNT2-2</id>
    </interactant>
    <interactant intactId="EBI-296550">
        <id>Q96KC8</id>
        <label>DNAJC1</label>
    </interactant>
    <organismsDiffer>false</organismsDiffer>
    <experiments>3</experiments>
</comment>
<comment type="interaction">
    <interactant intactId="EBI-11994282">
        <id>Q5SNT2-2</id>
    </interactant>
    <interactant intactId="EBI-489887">
        <id>P50402</id>
        <label>EMD</label>
    </interactant>
    <organismsDiffer>false</organismsDiffer>
    <experiments>4</experiments>
</comment>
<comment type="interaction">
    <interactant intactId="EBI-11994282">
        <id>Q5SNT2-2</id>
    </interactant>
    <interactant intactId="EBI-743099">
        <id>Q969F0</id>
        <label>FATE1</label>
    </interactant>
    <organismsDiffer>false</organismsDiffer>
    <experiments>3</experiments>
</comment>
<comment type="interaction">
    <interactant intactId="EBI-11994282">
        <id>Q5SNT2-2</id>
    </interactant>
    <interactant intactId="EBI-6911547">
        <id>A2A2Y4</id>
        <label>FRMD3</label>
    </interactant>
    <organismsDiffer>false</organismsDiffer>
    <experiments>3</experiments>
</comment>
<comment type="interaction">
    <interactant intactId="EBI-11994282">
        <id>Q5SNT2-2</id>
    </interactant>
    <interactant intactId="EBI-13345167">
        <id>Q8TDT2</id>
        <label>GPR152</label>
    </interactant>
    <organismsDiffer>false</organismsDiffer>
    <experiments>3</experiments>
</comment>
<comment type="interaction">
    <interactant intactId="EBI-11994282">
        <id>Q5SNT2-2</id>
    </interactant>
    <interactant intactId="EBI-12822837">
        <id>Q92806</id>
        <label>KCNJ9</label>
    </interactant>
    <organismsDiffer>false</organismsDiffer>
    <experiments>3</experiments>
</comment>
<comment type="interaction">
    <interactant intactId="EBI-11994282">
        <id>Q5SNT2-2</id>
    </interactant>
    <interactant intactId="EBI-2820517">
        <id>Q8TAF8</id>
        <label>LHFPL5</label>
    </interactant>
    <organismsDiffer>false</organismsDiffer>
    <experiments>3</experiments>
</comment>
<comment type="interaction">
    <interactant intactId="EBI-11994282">
        <id>Q5SNT2-2</id>
    </interactant>
    <interactant intactId="EBI-11304917">
        <id>Q8N386</id>
        <label>LRRC25</label>
    </interactant>
    <organismsDiffer>false</organismsDiffer>
    <experiments>3</experiments>
</comment>
<comment type="interaction">
    <interactant intactId="EBI-11994282">
        <id>Q5SNT2-2</id>
    </interactant>
    <interactant intactId="EBI-11956541">
        <id>Q9GZY8-5</id>
        <label>MFF</label>
    </interactant>
    <organismsDiffer>false</organismsDiffer>
    <experiments>3</experiments>
</comment>
<comment type="interaction">
    <interactant intactId="EBI-11994282">
        <id>Q5SNT2-2</id>
    </interactant>
    <interactant intactId="EBI-11977115">
        <id>Q9UPX6</id>
        <label>MINAR1</label>
    </interactant>
    <organismsDiffer>false</organismsDiffer>
    <experiments>3</experiments>
</comment>
<comment type="interaction">
    <interactant intactId="EBI-11994282">
        <id>Q5SNT2-2</id>
    </interactant>
    <interactant intactId="EBI-2682365">
        <id>Q8N183</id>
        <label>NDUFAF2</label>
    </interactant>
    <organismsDiffer>false</organismsDiffer>
    <experiments>3</experiments>
</comment>
<comment type="interaction">
    <interactant intactId="EBI-11994282">
        <id>Q5SNT2-2</id>
    </interactant>
    <interactant intactId="EBI-1220572">
        <id>P54829</id>
        <label>PTPN5</label>
    </interactant>
    <organismsDiffer>false</organismsDiffer>
    <experiments>3</experiments>
</comment>
<comment type="interaction">
    <interactant intactId="EBI-11994282">
        <id>Q5SNT2-2</id>
    </interactant>
    <interactant intactId="EBI-12814225">
        <id>Q9BXS9-3</id>
        <label>SLC26A6</label>
    </interactant>
    <organismsDiffer>false</organismsDiffer>
    <experiments>3</experiments>
</comment>
<comment type="interaction">
    <interactant intactId="EBI-11994282">
        <id>Q5SNT2-2</id>
    </interactant>
    <interactant intactId="EBI-10982110">
        <id>Q96Q45-2</id>
        <label>TMEM237</label>
    </interactant>
    <organismsDiffer>false</organismsDiffer>
    <experiments>3</experiments>
</comment>
<comment type="interaction">
    <interactant intactId="EBI-11994282">
        <id>Q5SNT2-2</id>
    </interactant>
    <interactant intactId="EBI-11722971">
        <id>Q53FP2</id>
        <label>TMEM35A</label>
    </interactant>
    <organismsDiffer>false</organismsDiffer>
    <experiments>3</experiments>
</comment>
<comment type="interaction">
    <interactant intactId="EBI-11994282">
        <id>Q5SNT2-2</id>
    </interactant>
    <interactant intactId="EBI-6447886">
        <id>Q9Y320</id>
        <label>TMX2</label>
    </interactant>
    <organismsDiffer>false</organismsDiffer>
    <experiments>3</experiments>
</comment>
<comment type="subcellular location">
    <subcellularLocation>
        <location evidence="6">Nucleus inner membrane</location>
        <topology evidence="2">Multi-pass membrane protein</topology>
    </subcellularLocation>
</comment>
<comment type="subcellular location">
    <molecule>Isoform 2</molecule>
    <subcellularLocation>
        <location evidence="4 5">Nucleus inner membrane</location>
        <topology evidence="4">Multi-pass membrane protein</topology>
    </subcellularLocation>
    <subcellularLocation>
        <location evidence="4">Cytoplasm</location>
        <location evidence="4">Cytoskeleton</location>
        <location evidence="4">Spindle pole</location>
    </subcellularLocation>
    <text evidence="4 5">The C-terminal of isoform 2 is located on the nucleoplasmic side. During interphase, isoform 2 is distributed in the inner nuclear membrane in distinct micro-domains and during mitosis, it is found in the ER but it also localizes to the polar regions of the mitotic spindle.</text>
</comment>
<comment type="alternative products">
    <event type="alternative splicing"/>
    <isoform>
        <id>Q5SNT2-1</id>
        <name>1</name>
        <sequence type="displayed"/>
    </isoform>
    <isoform>
        <id>Q5SNT2-2</id>
        <name>2</name>
        <name>SAMP1</name>
        <sequence type="described" ref="VSP_030915 VSP_030916"/>
    </isoform>
</comment>
<comment type="similarity">
    <text evidence="8">Belongs to the TMEM201 family.</text>
</comment>
<gene>
    <name type="primary">TMEM201</name>
    <name type="synonym">NET5</name>
    <name type="synonym">SAMP1</name>
</gene>
<feature type="chain" id="PRO_0000317198" description="Transmembrane protein 201">
    <location>
        <begin position="1"/>
        <end position="666"/>
    </location>
</feature>
<feature type="topological domain" description="Nuclear" evidence="5">
    <location>
        <begin position="1"/>
        <end position="213"/>
    </location>
</feature>
<feature type="transmembrane region" description="Helical" evidence="2">
    <location>
        <begin position="214"/>
        <end position="234"/>
    </location>
</feature>
<feature type="topological domain" description="Perinuclear space" evidence="8">
    <location>
        <begin position="235"/>
        <end position="297"/>
    </location>
</feature>
<feature type="transmembrane region" description="Helical" evidence="2">
    <location>
        <begin position="298"/>
        <end position="318"/>
    </location>
</feature>
<feature type="topological domain" description="Nuclear" evidence="8">
    <location>
        <begin position="319"/>
        <end position="322"/>
    </location>
</feature>
<feature type="transmembrane region" description="Helical" evidence="2">
    <location>
        <begin position="323"/>
        <end position="343"/>
    </location>
</feature>
<feature type="topological domain" description="Perinuclear space" evidence="8">
    <location>
        <begin position="344"/>
        <end position="356"/>
    </location>
</feature>
<feature type="transmembrane region" description="Helical" evidence="2">
    <location>
        <begin position="357"/>
        <end position="374"/>
    </location>
</feature>
<feature type="topological domain" description="Nuclear" evidence="8 9">
    <location>
        <begin position="375"/>
        <end position="644"/>
    </location>
</feature>
<feature type="transmembrane region" description="Helical" evidence="2">
    <location>
        <begin position="645"/>
        <end position="665"/>
    </location>
</feature>
<feature type="topological domain" description="Perinuclear space" evidence="8">
    <location>
        <position position="666"/>
    </location>
</feature>
<feature type="region of interest" description="Disordered" evidence="3">
    <location>
        <begin position="502"/>
        <end position="581"/>
    </location>
</feature>
<feature type="compositionally biased region" description="Low complexity" evidence="3">
    <location>
        <begin position="508"/>
        <end position="520"/>
    </location>
</feature>
<feature type="modified residue" description="N-acetylmethionine" evidence="14">
    <location>
        <position position="1"/>
    </location>
</feature>
<feature type="modified residue" description="Phosphoserine" evidence="15">
    <location>
        <position position="441"/>
    </location>
</feature>
<feature type="modified residue" description="Phosphoserine" evidence="15">
    <location>
        <position position="444"/>
    </location>
</feature>
<feature type="modified residue" description="Phosphoserine" evidence="15">
    <location>
        <position position="450"/>
    </location>
</feature>
<feature type="modified residue" description="Phosphoserine" evidence="11 12 13 15">
    <location>
        <position position="454"/>
    </location>
</feature>
<feature type="modified residue" description="Phosphoserine" evidence="15">
    <location>
        <position position="466"/>
    </location>
</feature>
<feature type="modified residue" description="Phosphoserine" evidence="15">
    <location>
        <position position="477"/>
    </location>
</feature>
<feature type="modified residue" description="Phosphoserine" evidence="15">
    <location>
        <position position="480"/>
    </location>
</feature>
<feature type="modified residue" description="Phosphoserine" evidence="12">
    <location>
        <position position="529"/>
    </location>
</feature>
<feature type="splice variant" id="VSP_030915" description="In isoform 2." evidence="7">
    <original>FFPGD</original>
    <variation>SEKQP</variation>
    <location>
        <begin position="388"/>
        <end position="392"/>
    </location>
</feature>
<feature type="splice variant" id="VSP_030916" description="In isoform 2." evidence="7">
    <location>
        <begin position="393"/>
        <end position="666"/>
    </location>
</feature>
<feature type="mutagenesis site" description="Impairs organization of the nuclear envelope; abolishes its localization to the nuclear envelope; impairs localization of SUN1 and EMD to the nuclear envelope." evidence="5">
    <original>C</original>
    <variation>A</variation>
    <location sequence="Q5SNT2-2">
        <position position="48"/>
    </location>
</feature>
<feature type="mutagenesis site" description="Abolishes localization to the nuclear envelopee; abolishes its localization to the nuclear envelope; impairs localization of SUN1 and EMD to the nuclear envelope." evidence="5">
    <original>C</original>
    <variation>A</variation>
    <location sequence="Q5SNT2-2">
        <position position="121"/>
    </location>
</feature>
<keyword id="KW-0007">Acetylation</keyword>
<keyword id="KW-0025">Alternative splicing</keyword>
<keyword id="KW-0037">Angiogenesis</keyword>
<keyword id="KW-0963">Cytoplasm</keyword>
<keyword id="KW-0206">Cytoskeleton</keyword>
<keyword id="KW-0472">Membrane</keyword>
<keyword id="KW-0539">Nucleus</keyword>
<keyword id="KW-0597">Phosphoprotein</keyword>
<keyword id="KW-1267">Proteomics identification</keyword>
<keyword id="KW-1185">Reference proteome</keyword>
<keyword id="KW-0812">Transmembrane</keyword>
<keyword id="KW-1133">Transmembrane helix</keyword>
<sequence>MEGVSALLARCPTAGLAGGLGVTACAAAGVLLYRIARRMKPTHTMVNCWFCNQDTLVPYGNRNCWDCPHCEQYNGFQENGDYNKPIPAQYLEHLNHVVSSAPSLRDPSQPQQWVSSQVLLCKRCNHHQTTKIKQLAAFAPREEGRYDEEVEVYRHHLEQMYKLCRPCQAAVEYYIKHQNRQLRALLLSHQFKRREADQTHAQNFSSAVKSPVQVILLRALAFLACAFLLTTALYGASGHFAPGTTVPLALPPGGNGSATPDNGTTPGAEGWRQLLGLLPEHMAEKLCEAWAFGQSHQTGVVALGLLTCLLAMLLAGRIRLRRIDAFCTCLWALLLGLHLAEQHLQAASPSWLDTLKFSTTSLCCLVGFTAAVATRKATGPRRFRPRRFFPGDSAGLFPTSPSLAIPHPSVGGSPASLFIPSPPSFLPLANQQLFRSPRRTSPSSLPGRLSRALSLGTIPSLTRADSGYLFSGSRPPSQVSRSGEFPVSDYFSLLSGSCPSSPLPSPAPSVAGSVASSSGSLRHRRPLISPARLNLKGQKLLLFPSPPGEAPTTPSSSDEHSPHNGSLFTMEPPHVPRKPPLQDVKHALDLRSKLERGSACSNRSIKKEDDSSQSSTCVVDTTTRGCSEEAATWRGRFGPSLVRGLLAVSLAANALFTSVFLYQSLR</sequence>
<proteinExistence type="evidence at protein level"/>
<accession>Q5SNT2</accession>
<accession>B9EH90</accession>
<accession>Q5SNT3</accession>
<reference key="1">
    <citation type="journal article" date="2006" name="Nature">
        <title>The DNA sequence and biological annotation of human chromosome 1.</title>
        <authorList>
            <person name="Gregory S.G."/>
            <person name="Barlow K.F."/>
            <person name="McLay K.E."/>
            <person name="Kaul R."/>
            <person name="Swarbreck D."/>
            <person name="Dunham A."/>
            <person name="Scott C.E."/>
            <person name="Howe K.L."/>
            <person name="Woodfine K."/>
            <person name="Spencer C.C.A."/>
            <person name="Jones M.C."/>
            <person name="Gillson C."/>
            <person name="Searle S."/>
            <person name="Zhou Y."/>
            <person name="Kokocinski F."/>
            <person name="McDonald L."/>
            <person name="Evans R."/>
            <person name="Phillips K."/>
            <person name="Atkinson A."/>
            <person name="Cooper R."/>
            <person name="Jones C."/>
            <person name="Hall R.E."/>
            <person name="Andrews T.D."/>
            <person name="Lloyd C."/>
            <person name="Ainscough R."/>
            <person name="Almeida J.P."/>
            <person name="Ambrose K.D."/>
            <person name="Anderson F."/>
            <person name="Andrew R.W."/>
            <person name="Ashwell R.I.S."/>
            <person name="Aubin K."/>
            <person name="Babbage A.K."/>
            <person name="Bagguley C.L."/>
            <person name="Bailey J."/>
            <person name="Beasley H."/>
            <person name="Bethel G."/>
            <person name="Bird C.P."/>
            <person name="Bray-Allen S."/>
            <person name="Brown J.Y."/>
            <person name="Brown A.J."/>
            <person name="Buckley D."/>
            <person name="Burton J."/>
            <person name="Bye J."/>
            <person name="Carder C."/>
            <person name="Chapman J.C."/>
            <person name="Clark S.Y."/>
            <person name="Clarke G."/>
            <person name="Clee C."/>
            <person name="Cobley V."/>
            <person name="Collier R.E."/>
            <person name="Corby N."/>
            <person name="Coville G.J."/>
            <person name="Davies J."/>
            <person name="Deadman R."/>
            <person name="Dunn M."/>
            <person name="Earthrowl M."/>
            <person name="Ellington A.G."/>
            <person name="Errington H."/>
            <person name="Frankish A."/>
            <person name="Frankland J."/>
            <person name="French L."/>
            <person name="Garner P."/>
            <person name="Garnett J."/>
            <person name="Gay L."/>
            <person name="Ghori M.R.J."/>
            <person name="Gibson R."/>
            <person name="Gilby L.M."/>
            <person name="Gillett W."/>
            <person name="Glithero R.J."/>
            <person name="Grafham D.V."/>
            <person name="Griffiths C."/>
            <person name="Griffiths-Jones S."/>
            <person name="Grocock R."/>
            <person name="Hammond S."/>
            <person name="Harrison E.S.I."/>
            <person name="Hart E."/>
            <person name="Haugen E."/>
            <person name="Heath P.D."/>
            <person name="Holmes S."/>
            <person name="Holt K."/>
            <person name="Howden P.J."/>
            <person name="Hunt A.R."/>
            <person name="Hunt S.E."/>
            <person name="Hunter G."/>
            <person name="Isherwood J."/>
            <person name="James R."/>
            <person name="Johnson C."/>
            <person name="Johnson D."/>
            <person name="Joy A."/>
            <person name="Kay M."/>
            <person name="Kershaw J.K."/>
            <person name="Kibukawa M."/>
            <person name="Kimberley A.M."/>
            <person name="King A."/>
            <person name="Knights A.J."/>
            <person name="Lad H."/>
            <person name="Laird G."/>
            <person name="Lawlor S."/>
            <person name="Leongamornlert D.A."/>
            <person name="Lloyd D.M."/>
            <person name="Loveland J."/>
            <person name="Lovell J."/>
            <person name="Lush M.J."/>
            <person name="Lyne R."/>
            <person name="Martin S."/>
            <person name="Mashreghi-Mohammadi M."/>
            <person name="Matthews L."/>
            <person name="Matthews N.S.W."/>
            <person name="McLaren S."/>
            <person name="Milne S."/>
            <person name="Mistry S."/>
            <person name="Moore M.J.F."/>
            <person name="Nickerson T."/>
            <person name="O'Dell C.N."/>
            <person name="Oliver K."/>
            <person name="Palmeiri A."/>
            <person name="Palmer S.A."/>
            <person name="Parker A."/>
            <person name="Patel D."/>
            <person name="Pearce A.V."/>
            <person name="Peck A.I."/>
            <person name="Pelan S."/>
            <person name="Phelps K."/>
            <person name="Phillimore B.J."/>
            <person name="Plumb R."/>
            <person name="Rajan J."/>
            <person name="Raymond C."/>
            <person name="Rouse G."/>
            <person name="Saenphimmachak C."/>
            <person name="Sehra H.K."/>
            <person name="Sheridan E."/>
            <person name="Shownkeen R."/>
            <person name="Sims S."/>
            <person name="Skuce C.D."/>
            <person name="Smith M."/>
            <person name="Steward C."/>
            <person name="Subramanian S."/>
            <person name="Sycamore N."/>
            <person name="Tracey A."/>
            <person name="Tromans A."/>
            <person name="Van Helmond Z."/>
            <person name="Wall M."/>
            <person name="Wallis J.M."/>
            <person name="White S."/>
            <person name="Whitehead S.L."/>
            <person name="Wilkinson J.E."/>
            <person name="Willey D.L."/>
            <person name="Williams H."/>
            <person name="Wilming L."/>
            <person name="Wray P.W."/>
            <person name="Wu Z."/>
            <person name="Coulson A."/>
            <person name="Vaudin M."/>
            <person name="Sulston J.E."/>
            <person name="Durbin R.M."/>
            <person name="Hubbard T."/>
            <person name="Wooster R."/>
            <person name="Dunham I."/>
            <person name="Carter N.P."/>
            <person name="McVean G."/>
            <person name="Ross M.T."/>
            <person name="Harrow J."/>
            <person name="Olson M.V."/>
            <person name="Beck S."/>
            <person name="Rogers J."/>
            <person name="Bentley D.R."/>
        </authorList>
    </citation>
    <scope>NUCLEOTIDE SEQUENCE [LARGE SCALE GENOMIC DNA]</scope>
</reference>
<reference key="2">
    <citation type="journal article" date="2004" name="Genome Res.">
        <title>The status, quality, and expansion of the NIH full-length cDNA project: the Mammalian Gene Collection (MGC).</title>
        <authorList>
            <consortium name="The MGC Project Team"/>
        </authorList>
    </citation>
    <scope>NUCLEOTIDE SEQUENCE [LARGE SCALE MRNA] (ISOFORM 2)</scope>
    <source>
        <tissue>Eye</tissue>
    </source>
</reference>
<reference key="3">
    <citation type="journal article" date="2008" name="Mol. Cell">
        <title>Kinase-selective enrichment enables quantitative phosphoproteomics of the kinome across the cell cycle.</title>
        <authorList>
            <person name="Daub H."/>
            <person name="Olsen J.V."/>
            <person name="Bairlein M."/>
            <person name="Gnad F."/>
            <person name="Oppermann F.S."/>
            <person name="Korner R."/>
            <person name="Greff Z."/>
            <person name="Keri G."/>
            <person name="Stemmann O."/>
            <person name="Mann M."/>
        </authorList>
    </citation>
    <scope>PHOSPHORYLATION [LARGE SCALE ANALYSIS] AT SER-454 AND SER-529</scope>
    <scope>IDENTIFICATION BY MASS SPECTROMETRY [LARGE SCALE ANALYSIS]</scope>
    <source>
        <tissue>Cervix carcinoma</tissue>
    </source>
</reference>
<reference key="4">
    <citation type="journal article" date="2008" name="Proc. Natl. Acad. Sci. U.S.A.">
        <title>A quantitative atlas of mitotic phosphorylation.</title>
        <authorList>
            <person name="Dephoure N."/>
            <person name="Zhou C."/>
            <person name="Villen J."/>
            <person name="Beausoleil S.A."/>
            <person name="Bakalarski C.E."/>
            <person name="Elledge S.J."/>
            <person name="Gygi S.P."/>
        </authorList>
    </citation>
    <scope>PHOSPHORYLATION [LARGE SCALE ANALYSIS] AT SER-454</scope>
    <scope>IDENTIFICATION BY MASS SPECTROMETRY [LARGE SCALE ANALYSIS]</scope>
    <source>
        <tissue>Cervix carcinoma</tissue>
    </source>
</reference>
<reference key="5">
    <citation type="journal article" date="2009" name="J. Cell Sci.">
        <title>An integral protein of the inner nuclear membrane localizes to the mitotic spindle in mammalian cells.</title>
        <authorList>
            <person name="Buch C."/>
            <person name="Lindberg R."/>
            <person name="Figueroa R."/>
            <person name="Gudise S."/>
            <person name="Onischenko E."/>
            <person name="Hallberg E."/>
        </authorList>
    </citation>
    <scope>FUNCTION (ISOFORM 2)</scope>
    <scope>SUBCELLULAR LOCATION (ISOFORM 2)</scope>
</reference>
<reference key="6">
    <citation type="journal article" date="2010" name="Sci. Signal.">
        <title>Quantitative phosphoproteomics reveals widespread full phosphorylation site occupancy during mitosis.</title>
        <authorList>
            <person name="Olsen J.V."/>
            <person name="Vermeulen M."/>
            <person name="Santamaria A."/>
            <person name="Kumar C."/>
            <person name="Miller M.L."/>
            <person name="Jensen L.J."/>
            <person name="Gnad F."/>
            <person name="Cox J."/>
            <person name="Jensen T.S."/>
            <person name="Nigg E.A."/>
            <person name="Brunak S."/>
            <person name="Mann M."/>
        </authorList>
    </citation>
    <scope>PHOSPHORYLATION [LARGE SCALE ANALYSIS] AT SER-454</scope>
    <scope>IDENTIFICATION BY MASS SPECTROMETRY [LARGE SCALE ANALYSIS]</scope>
    <source>
        <tissue>Cervix carcinoma</tissue>
    </source>
</reference>
<reference key="7">
    <citation type="journal article" date="2011" name="J. Cell Sci.">
        <title>Samp1 is functionally associated with the LINC complex and A-type lamina networks.</title>
        <authorList>
            <person name="Gudise S."/>
            <person name="Figueroa R.A."/>
            <person name="Lindberg R."/>
            <person name="Larsson V."/>
            <person name="Hallberg E."/>
        </authorList>
    </citation>
    <scope>SUBCELLULAR LOCATION (ISOFORM 2)</scope>
    <scope>TOPOLOGY (ISOFORM 2)</scope>
    <scope>MUTAGENESIS OF CYS-48 AND CYS-121 (ISOFORM 2)</scope>
    <scope>INTERACTION WITH EMD (ISOFORM 2)</scope>
    <scope>FUNCTION (ISOFORM 2)</scope>
</reference>
<reference key="8">
    <citation type="journal article" date="2012" name="Proc. Natl. Acad. Sci. U.S.A.">
        <title>N-terminal acetylome analyses and functional insights of the N-terminal acetyltransferase NatB.</title>
        <authorList>
            <person name="Van Damme P."/>
            <person name="Lasa M."/>
            <person name="Polevoda B."/>
            <person name="Gazquez C."/>
            <person name="Elosegui-Artola A."/>
            <person name="Kim D.S."/>
            <person name="De Juan-Pardo E."/>
            <person name="Demeyer K."/>
            <person name="Hole K."/>
            <person name="Larrea E."/>
            <person name="Timmerman E."/>
            <person name="Prieto J."/>
            <person name="Arnesen T."/>
            <person name="Sherman F."/>
            <person name="Gevaert K."/>
            <person name="Aldabe R."/>
        </authorList>
    </citation>
    <scope>ACETYLATION [LARGE SCALE ANALYSIS] AT MET-1</scope>
    <scope>IDENTIFICATION BY MASS SPECTROMETRY [LARGE SCALE ANALYSIS]</scope>
</reference>
<reference key="9">
    <citation type="journal article" date="2013" name="J. Proteome Res.">
        <title>Toward a comprehensive characterization of a human cancer cell phosphoproteome.</title>
        <authorList>
            <person name="Zhou H."/>
            <person name="Di Palma S."/>
            <person name="Preisinger C."/>
            <person name="Peng M."/>
            <person name="Polat A.N."/>
            <person name="Heck A.J."/>
            <person name="Mohammed S."/>
        </authorList>
    </citation>
    <scope>PHOSPHORYLATION [LARGE SCALE ANALYSIS] AT SER-441; SER-444; SER-450; SER-454; SER-466; SER-477 AND SER-480</scope>
    <scope>IDENTIFICATION BY MASS SPECTROMETRY [LARGE SCALE ANALYSIS]</scope>
    <source>
        <tissue>Cervix carcinoma</tissue>
        <tissue>Erythroleukemia</tissue>
    </source>
</reference>
<reference key="10">
    <citation type="journal article" date="2016" name="Nucleus">
        <title>Samp1, a RanGTP binding transmembrane protein in the inner nuclear membrane.</title>
        <authorList>
            <person name="Vijayaraghavan B."/>
            <person name="Jafferali M.H."/>
            <person name="Figueroa R.A."/>
            <person name="Hallberg E."/>
        </authorList>
    </citation>
    <scope>FUNCTION</scope>
    <scope>SUBUNIT</scope>
</reference>
<reference key="11">
    <citation type="journal article" date="2022" name="J. Mol. Cell Biol.">
        <title>Inner nuclear membrane protein TMEM201 maintains endothelial cell migration and angiogenesis by interacting with the LINC complex.</title>
        <authorList>
            <person name="Zhang Y."/>
            <person name="Kong Y."/>
            <person name="Guo H."/>
            <person name="Liu Y."/>
            <person name="Zang Y."/>
            <person name="Li J."/>
        </authorList>
    </citation>
    <scope>FUNCTION</scope>
    <scope>SUBCELLULAR LOCATION</scope>
    <scope>INTERACTION WITH SUN2 AND LMNA</scope>
</reference>
<evidence type="ECO:0000250" key="1">
    <source>
        <dbReference type="UniProtKB" id="A2A8U2"/>
    </source>
</evidence>
<evidence type="ECO:0000255" key="2"/>
<evidence type="ECO:0000256" key="3">
    <source>
        <dbReference type="SAM" id="MobiDB-lite"/>
    </source>
</evidence>
<evidence type="ECO:0000269" key="4">
    <source>
    </source>
</evidence>
<evidence type="ECO:0000269" key="5">
    <source>
    </source>
</evidence>
<evidence type="ECO:0000269" key="6">
    <source>
    </source>
</evidence>
<evidence type="ECO:0000303" key="7">
    <source>
    </source>
</evidence>
<evidence type="ECO:0000305" key="8"/>
<evidence type="ECO:0000305" key="9">
    <source>
    </source>
</evidence>
<evidence type="ECO:0000305" key="10">
    <source>
    </source>
</evidence>
<evidence type="ECO:0007744" key="11">
    <source>
    </source>
</evidence>
<evidence type="ECO:0007744" key="12">
    <source>
    </source>
</evidence>
<evidence type="ECO:0007744" key="13">
    <source>
    </source>
</evidence>
<evidence type="ECO:0007744" key="14">
    <source>
    </source>
</evidence>
<evidence type="ECO:0007744" key="15">
    <source>
    </source>
</evidence>
<organism>
    <name type="scientific">Homo sapiens</name>
    <name type="common">Human</name>
    <dbReference type="NCBI Taxonomy" id="9606"/>
    <lineage>
        <taxon>Eukaryota</taxon>
        <taxon>Metazoa</taxon>
        <taxon>Chordata</taxon>
        <taxon>Craniata</taxon>
        <taxon>Vertebrata</taxon>
        <taxon>Euteleostomi</taxon>
        <taxon>Mammalia</taxon>
        <taxon>Eutheria</taxon>
        <taxon>Euarchontoglires</taxon>
        <taxon>Primates</taxon>
        <taxon>Haplorrhini</taxon>
        <taxon>Catarrhini</taxon>
        <taxon>Hominidae</taxon>
        <taxon>Homo</taxon>
    </lineage>
</organism>